<keyword id="KW-0665">Pyrimidine biosynthesis</keyword>
<keyword id="KW-1185">Reference proteome</keyword>
<keyword id="KW-0808">Transferase</keyword>
<gene>
    <name evidence="1" type="primary">pyrB</name>
    <name type="ordered locus">cauri_1176</name>
</gene>
<protein>
    <recommendedName>
        <fullName evidence="1">Aspartate carbamoyltransferase catalytic subunit</fullName>
        <ecNumber evidence="1">2.1.3.2</ecNumber>
    </recommendedName>
    <alternativeName>
        <fullName evidence="1">Aspartate transcarbamylase</fullName>
        <shortName evidence="1">ATCase</shortName>
    </alternativeName>
</protein>
<organism>
    <name type="scientific">Corynebacterium aurimucosum (strain ATCC 700975 / DSM 44827 / CIP 107346 / CN-1)</name>
    <name type="common">Corynebacterium nigricans</name>
    <dbReference type="NCBI Taxonomy" id="548476"/>
    <lineage>
        <taxon>Bacteria</taxon>
        <taxon>Bacillati</taxon>
        <taxon>Actinomycetota</taxon>
        <taxon>Actinomycetes</taxon>
        <taxon>Mycobacteriales</taxon>
        <taxon>Corynebacteriaceae</taxon>
        <taxon>Corynebacterium</taxon>
    </lineage>
</organism>
<reference key="1">
    <citation type="journal article" date="2010" name="BMC Genomics">
        <title>Complete genome sequence and lifestyle of black-pigmented Corynebacterium aurimucosum ATCC 700975 (formerly C. nigricans CN-1) isolated from a vaginal swab of a woman with spontaneous abortion.</title>
        <authorList>
            <person name="Trost E."/>
            <person name="Gotker S."/>
            <person name="Schneider J."/>
            <person name="Schneiker-Bekel S."/>
            <person name="Szczepanowski R."/>
            <person name="Tilker A."/>
            <person name="Viehoever P."/>
            <person name="Arnold W."/>
            <person name="Bekel T."/>
            <person name="Blom J."/>
            <person name="Gartemann K.H."/>
            <person name="Linke B."/>
            <person name="Goesmann A."/>
            <person name="Puhler A."/>
            <person name="Shukla S.K."/>
            <person name="Tauch A."/>
        </authorList>
    </citation>
    <scope>NUCLEOTIDE SEQUENCE [LARGE SCALE GENOMIC DNA]</scope>
    <source>
        <strain>ATCC 700975 / DSM 44827 / CIP 107346 / CN-1</strain>
    </source>
</reference>
<name>PYRB_CORA7</name>
<comment type="function">
    <text evidence="1">Catalyzes the condensation of carbamoyl phosphate and aspartate to form carbamoyl aspartate and inorganic phosphate, the committed step in the de novo pyrimidine nucleotide biosynthesis pathway.</text>
</comment>
<comment type="catalytic activity">
    <reaction evidence="1">
        <text>carbamoyl phosphate + L-aspartate = N-carbamoyl-L-aspartate + phosphate + H(+)</text>
        <dbReference type="Rhea" id="RHEA:20013"/>
        <dbReference type="ChEBI" id="CHEBI:15378"/>
        <dbReference type="ChEBI" id="CHEBI:29991"/>
        <dbReference type="ChEBI" id="CHEBI:32814"/>
        <dbReference type="ChEBI" id="CHEBI:43474"/>
        <dbReference type="ChEBI" id="CHEBI:58228"/>
        <dbReference type="EC" id="2.1.3.2"/>
    </reaction>
</comment>
<comment type="pathway">
    <text evidence="1">Pyrimidine metabolism; UMP biosynthesis via de novo pathway; (S)-dihydroorotate from bicarbonate: step 2/3.</text>
</comment>
<comment type="subunit">
    <text evidence="1">Heterododecamer (2C3:3R2) of six catalytic PyrB chains organized as two trimers (C3), and six regulatory PyrI chains organized as three dimers (R2).</text>
</comment>
<comment type="similarity">
    <text evidence="1">Belongs to the aspartate/ornithine carbamoyltransferase superfamily. ATCase family.</text>
</comment>
<feature type="chain" id="PRO_1000116136" description="Aspartate carbamoyltransferase catalytic subunit">
    <location>
        <begin position="1"/>
        <end position="323"/>
    </location>
</feature>
<feature type="binding site" evidence="1">
    <location>
        <position position="55"/>
    </location>
    <ligand>
        <name>carbamoyl phosphate</name>
        <dbReference type="ChEBI" id="CHEBI:58228"/>
    </ligand>
</feature>
<feature type="binding site" evidence="1">
    <location>
        <position position="56"/>
    </location>
    <ligand>
        <name>carbamoyl phosphate</name>
        <dbReference type="ChEBI" id="CHEBI:58228"/>
    </ligand>
</feature>
<feature type="binding site" evidence="1">
    <location>
        <position position="83"/>
    </location>
    <ligand>
        <name>L-aspartate</name>
        <dbReference type="ChEBI" id="CHEBI:29991"/>
    </ligand>
</feature>
<feature type="binding site" evidence="1">
    <location>
        <position position="105"/>
    </location>
    <ligand>
        <name>carbamoyl phosphate</name>
        <dbReference type="ChEBI" id="CHEBI:58228"/>
    </ligand>
</feature>
<feature type="binding site" evidence="1">
    <location>
        <position position="138"/>
    </location>
    <ligand>
        <name>carbamoyl phosphate</name>
        <dbReference type="ChEBI" id="CHEBI:58228"/>
    </ligand>
</feature>
<feature type="binding site" evidence="1">
    <location>
        <position position="141"/>
    </location>
    <ligand>
        <name>carbamoyl phosphate</name>
        <dbReference type="ChEBI" id="CHEBI:58228"/>
    </ligand>
</feature>
<feature type="binding site" evidence="1">
    <location>
        <position position="181"/>
    </location>
    <ligand>
        <name>L-aspartate</name>
        <dbReference type="ChEBI" id="CHEBI:29991"/>
    </ligand>
</feature>
<feature type="binding site" evidence="1">
    <location>
        <position position="235"/>
    </location>
    <ligand>
        <name>L-aspartate</name>
        <dbReference type="ChEBI" id="CHEBI:29991"/>
    </ligand>
</feature>
<feature type="binding site" evidence="1">
    <location>
        <position position="276"/>
    </location>
    <ligand>
        <name>carbamoyl phosphate</name>
        <dbReference type="ChEBI" id="CHEBI:58228"/>
    </ligand>
</feature>
<feature type="binding site" evidence="1">
    <location>
        <position position="277"/>
    </location>
    <ligand>
        <name>carbamoyl phosphate</name>
        <dbReference type="ChEBI" id="CHEBI:58228"/>
    </ligand>
</feature>
<evidence type="ECO:0000255" key="1">
    <source>
        <dbReference type="HAMAP-Rule" id="MF_00001"/>
    </source>
</evidence>
<proteinExistence type="inferred from homology"/>
<sequence length="323" mass="34878">MKHLINIADHSAEEILGLMDEADRFREALEGREVKKLPTLRGRTVFTLFYENSTRTRSSFETAGKWMSADVINLSASTSSVKKGESLKDTGLTLASIGADAIIMRHPSSGAAQQLAGWVAPEGQGPSVINAGDGSHQHPTQALLDAVTMRQRLHLGADRSAAGTGFEGLKVTIVGDCLHSRVVRSNVDLLSTLGAEVTLVAPPTLLPFGVDTWPVRVSHDFDAEVPEADVVMMLRVQAERMNGGFFPSHREYASLYGLSKDRAAAMKKDAIIMHPGPMVRGMEINYAVADYDNTAVLQQVNNGVHVRMATLFTLLTNGENAGI</sequence>
<accession>C3PG15</accession>
<dbReference type="EC" id="2.1.3.2" evidence="1"/>
<dbReference type="EMBL" id="CP001601">
    <property type="protein sequence ID" value="ACP32769.1"/>
    <property type="molecule type" value="Genomic_DNA"/>
</dbReference>
<dbReference type="RefSeq" id="WP_010186812.1">
    <property type="nucleotide sequence ID" value="NC_012590.1"/>
</dbReference>
<dbReference type="SMR" id="C3PG15"/>
<dbReference type="STRING" id="548476.cauri_1176"/>
<dbReference type="GeneID" id="31923799"/>
<dbReference type="KEGG" id="car:cauri_1176"/>
<dbReference type="eggNOG" id="COG0540">
    <property type="taxonomic scope" value="Bacteria"/>
</dbReference>
<dbReference type="HOGENOM" id="CLU_043846_2_0_11"/>
<dbReference type="OrthoDB" id="9774690at2"/>
<dbReference type="UniPathway" id="UPA00070">
    <property type="reaction ID" value="UER00116"/>
</dbReference>
<dbReference type="Proteomes" id="UP000002077">
    <property type="component" value="Chromosome"/>
</dbReference>
<dbReference type="GO" id="GO:0005829">
    <property type="term" value="C:cytosol"/>
    <property type="evidence" value="ECO:0007669"/>
    <property type="project" value="TreeGrafter"/>
</dbReference>
<dbReference type="GO" id="GO:0016597">
    <property type="term" value="F:amino acid binding"/>
    <property type="evidence" value="ECO:0007669"/>
    <property type="project" value="InterPro"/>
</dbReference>
<dbReference type="GO" id="GO:0004070">
    <property type="term" value="F:aspartate carbamoyltransferase activity"/>
    <property type="evidence" value="ECO:0007669"/>
    <property type="project" value="UniProtKB-UniRule"/>
</dbReference>
<dbReference type="GO" id="GO:0006207">
    <property type="term" value="P:'de novo' pyrimidine nucleobase biosynthetic process"/>
    <property type="evidence" value="ECO:0007669"/>
    <property type="project" value="InterPro"/>
</dbReference>
<dbReference type="GO" id="GO:0044205">
    <property type="term" value="P:'de novo' UMP biosynthetic process"/>
    <property type="evidence" value="ECO:0007669"/>
    <property type="project" value="UniProtKB-UniRule"/>
</dbReference>
<dbReference type="GO" id="GO:0006520">
    <property type="term" value="P:amino acid metabolic process"/>
    <property type="evidence" value="ECO:0007669"/>
    <property type="project" value="InterPro"/>
</dbReference>
<dbReference type="FunFam" id="3.40.50.1370:FF:000007">
    <property type="entry name" value="Aspartate carbamoyltransferase"/>
    <property type="match status" value="1"/>
</dbReference>
<dbReference type="Gene3D" id="3.40.50.1370">
    <property type="entry name" value="Aspartate/ornithine carbamoyltransferase"/>
    <property type="match status" value="2"/>
</dbReference>
<dbReference type="HAMAP" id="MF_00001">
    <property type="entry name" value="Asp_carb_tr"/>
    <property type="match status" value="1"/>
</dbReference>
<dbReference type="InterPro" id="IPR006132">
    <property type="entry name" value="Asp/Orn_carbamoyltranf_P-bd"/>
</dbReference>
<dbReference type="InterPro" id="IPR006130">
    <property type="entry name" value="Asp/Orn_carbamoylTrfase"/>
</dbReference>
<dbReference type="InterPro" id="IPR036901">
    <property type="entry name" value="Asp/Orn_carbamoylTrfase_sf"/>
</dbReference>
<dbReference type="InterPro" id="IPR002082">
    <property type="entry name" value="Asp_carbamoyltransf"/>
</dbReference>
<dbReference type="InterPro" id="IPR006131">
    <property type="entry name" value="Asp_carbamoyltransf_Asp/Orn-bd"/>
</dbReference>
<dbReference type="NCBIfam" id="TIGR00670">
    <property type="entry name" value="asp_carb_tr"/>
    <property type="match status" value="1"/>
</dbReference>
<dbReference type="NCBIfam" id="NF002032">
    <property type="entry name" value="PRK00856.1"/>
    <property type="match status" value="1"/>
</dbReference>
<dbReference type="PANTHER" id="PTHR45753:SF6">
    <property type="entry name" value="ASPARTATE CARBAMOYLTRANSFERASE"/>
    <property type="match status" value="1"/>
</dbReference>
<dbReference type="PANTHER" id="PTHR45753">
    <property type="entry name" value="ORNITHINE CARBAMOYLTRANSFERASE, MITOCHONDRIAL"/>
    <property type="match status" value="1"/>
</dbReference>
<dbReference type="Pfam" id="PF00185">
    <property type="entry name" value="OTCace"/>
    <property type="match status" value="1"/>
</dbReference>
<dbReference type="Pfam" id="PF02729">
    <property type="entry name" value="OTCace_N"/>
    <property type="match status" value="1"/>
</dbReference>
<dbReference type="PRINTS" id="PR00100">
    <property type="entry name" value="AOTCASE"/>
</dbReference>
<dbReference type="PRINTS" id="PR00101">
    <property type="entry name" value="ATCASE"/>
</dbReference>
<dbReference type="SUPFAM" id="SSF53671">
    <property type="entry name" value="Aspartate/ornithine carbamoyltransferase"/>
    <property type="match status" value="1"/>
</dbReference>
<dbReference type="PROSITE" id="PS00097">
    <property type="entry name" value="CARBAMOYLTRANSFERASE"/>
    <property type="match status" value="1"/>
</dbReference>